<evidence type="ECO:0000250" key="1"/>
<evidence type="ECO:0000305" key="2"/>
<name>RK23_MARPO</name>
<feature type="chain" id="PRO_0000129454" description="Large ribosomal subunit protein uL23c">
    <location>
        <begin position="1"/>
        <end position="91"/>
    </location>
</feature>
<sequence>MNQVKYPVLTEKTIRLLEKNQYSFDVNIDSNKTQIKKWIELFFNVKVISVNSHRLPKKKKKIGTTTGYTVRYKRMIIKLQSGYSIPLFSNK</sequence>
<keyword id="KW-0150">Chloroplast</keyword>
<keyword id="KW-0934">Plastid</keyword>
<keyword id="KW-0687">Ribonucleoprotein</keyword>
<keyword id="KW-0689">Ribosomal protein</keyword>
<keyword id="KW-0694">RNA-binding</keyword>
<keyword id="KW-0699">rRNA-binding</keyword>
<dbReference type="EMBL" id="X04465">
    <property type="protein sequence ID" value="CAA28128.1"/>
    <property type="molecule type" value="Genomic_DNA"/>
</dbReference>
<dbReference type="EMBL" id="D00379">
    <property type="protein sequence ID" value="BAA00283.1"/>
    <property type="molecule type" value="Genomic_DNA"/>
</dbReference>
<dbReference type="PIR" id="A02816">
    <property type="entry name" value="R5LV23"/>
</dbReference>
<dbReference type="RefSeq" id="NP_039342.1">
    <property type="nucleotide sequence ID" value="NC_001319.1"/>
</dbReference>
<dbReference type="SMR" id="P06390"/>
<dbReference type="GeneID" id="2702574"/>
<dbReference type="GO" id="GO:0009507">
    <property type="term" value="C:chloroplast"/>
    <property type="evidence" value="ECO:0007669"/>
    <property type="project" value="UniProtKB-SubCell"/>
</dbReference>
<dbReference type="GO" id="GO:1990904">
    <property type="term" value="C:ribonucleoprotein complex"/>
    <property type="evidence" value="ECO:0007669"/>
    <property type="project" value="UniProtKB-KW"/>
</dbReference>
<dbReference type="GO" id="GO:0005840">
    <property type="term" value="C:ribosome"/>
    <property type="evidence" value="ECO:0007669"/>
    <property type="project" value="UniProtKB-KW"/>
</dbReference>
<dbReference type="GO" id="GO:0019843">
    <property type="term" value="F:rRNA binding"/>
    <property type="evidence" value="ECO:0007669"/>
    <property type="project" value="UniProtKB-UniRule"/>
</dbReference>
<dbReference type="GO" id="GO:0003735">
    <property type="term" value="F:structural constituent of ribosome"/>
    <property type="evidence" value="ECO:0007669"/>
    <property type="project" value="InterPro"/>
</dbReference>
<dbReference type="GO" id="GO:0006412">
    <property type="term" value="P:translation"/>
    <property type="evidence" value="ECO:0007669"/>
    <property type="project" value="UniProtKB-UniRule"/>
</dbReference>
<dbReference type="Gene3D" id="3.30.70.330">
    <property type="match status" value="1"/>
</dbReference>
<dbReference type="HAMAP" id="MF_01369_B">
    <property type="entry name" value="Ribosomal_uL23_B"/>
    <property type="match status" value="1"/>
</dbReference>
<dbReference type="InterPro" id="IPR012677">
    <property type="entry name" value="Nucleotide-bd_a/b_plait_sf"/>
</dbReference>
<dbReference type="InterPro" id="IPR013025">
    <property type="entry name" value="Ribosomal_uL23-like"/>
</dbReference>
<dbReference type="InterPro" id="IPR012678">
    <property type="entry name" value="Ribosomal_uL23/eL15/eS24_sf"/>
</dbReference>
<dbReference type="InterPro" id="IPR001014">
    <property type="entry name" value="Ribosomal_uL23_CS"/>
</dbReference>
<dbReference type="NCBIfam" id="NF004363">
    <property type="entry name" value="PRK05738.2-4"/>
    <property type="match status" value="1"/>
</dbReference>
<dbReference type="PANTHER" id="PTHR11620">
    <property type="entry name" value="60S RIBOSOMAL PROTEIN L23A"/>
    <property type="match status" value="1"/>
</dbReference>
<dbReference type="Pfam" id="PF00276">
    <property type="entry name" value="Ribosomal_L23"/>
    <property type="match status" value="1"/>
</dbReference>
<dbReference type="SUPFAM" id="SSF54189">
    <property type="entry name" value="Ribosomal proteins S24e, L23 and L15e"/>
    <property type="match status" value="1"/>
</dbReference>
<dbReference type="PROSITE" id="PS00050">
    <property type="entry name" value="RIBOSOMAL_L23"/>
    <property type="match status" value="1"/>
</dbReference>
<comment type="function">
    <text evidence="1">Binds to 23S rRNA.</text>
</comment>
<comment type="subunit">
    <text evidence="1">Part of the 50S ribosomal subunit.</text>
</comment>
<comment type="subcellular location">
    <subcellularLocation>
        <location>Plastid</location>
        <location>Chloroplast</location>
    </subcellularLocation>
</comment>
<comment type="similarity">
    <text evidence="2">Belongs to the universal ribosomal protein uL23 family.</text>
</comment>
<reference key="1">
    <citation type="journal article" date="1988" name="J. Mol. Biol.">
        <title>Structure and organization of Marchantia polymorpha chloroplast genome. III. Gene organization of the large single copy region from rbcL to trnI(CAU).</title>
        <authorList>
            <person name="Fukuzawa H."/>
            <person name="Kohchi T."/>
            <person name="Sano T."/>
            <person name="Shirai H."/>
            <person name="Umesono K."/>
            <person name="Inokuchi H."/>
            <person name="Ozeki H."/>
            <person name="Ohyama K."/>
        </authorList>
    </citation>
    <scope>NUCLEOTIDE SEQUENCE [GENOMIC DNA]</scope>
</reference>
<reference key="2">
    <citation type="journal article" date="1986" name="Nature">
        <title>Chloroplast gene organization deduced from complete sequence of liverwort Marchantia polymorpha chloroplast DNA.</title>
        <authorList>
            <person name="Ohyama K."/>
            <person name="Fukuzawa H."/>
            <person name="Kohchi T."/>
            <person name="Shirai H."/>
            <person name="Sano T."/>
            <person name="Sano S."/>
            <person name="Umesono K."/>
            <person name="Shiki Y."/>
            <person name="Takeuchi M."/>
            <person name="Chang Z."/>
            <person name="Aota S."/>
            <person name="Inokuchi H."/>
            <person name="Ozeki H."/>
        </authorList>
    </citation>
    <scope>NUCLEOTIDE SEQUENCE [LARGE SCALE GENOMIC DNA]</scope>
</reference>
<reference key="3">
    <citation type="journal article" date="1985" name="Agric. Biol. Chem.">
        <title>Molecular cloning of promoters functional in Escherichia coli from chloroplast DNA of a liverwort, Marchantia polymorpha.</title>
        <authorList>
            <person name="Fukuzawa H."/>
            <person name="Uchida Y."/>
            <person name="Yamano Y."/>
            <person name="Ohyama K."/>
            <person name="Komano T."/>
        </authorList>
    </citation>
    <scope>NUCLEOTIDE SEQUENCE [GENOMIC DNA]</scope>
</reference>
<proteinExistence type="inferred from homology"/>
<gene>
    <name type="primary">rpl23</name>
</gene>
<geneLocation type="chloroplast"/>
<accession>P06390</accession>
<organism>
    <name type="scientific">Marchantia polymorpha</name>
    <name type="common">Common liverwort</name>
    <name type="synonym">Marchantia aquatica</name>
    <dbReference type="NCBI Taxonomy" id="3197"/>
    <lineage>
        <taxon>Eukaryota</taxon>
        <taxon>Viridiplantae</taxon>
        <taxon>Streptophyta</taxon>
        <taxon>Embryophyta</taxon>
        <taxon>Marchantiophyta</taxon>
        <taxon>Marchantiopsida</taxon>
        <taxon>Marchantiidae</taxon>
        <taxon>Marchantiales</taxon>
        <taxon>Marchantiaceae</taxon>
        <taxon>Marchantia</taxon>
    </lineage>
</organism>
<protein>
    <recommendedName>
        <fullName evidence="2">Large ribosomal subunit protein uL23c</fullName>
    </recommendedName>
    <alternativeName>
        <fullName>50S ribosomal protein L23, chloroplastic</fullName>
    </alternativeName>
</protein>